<comment type="function">
    <text evidence="1">Involved in protein export. Acts as a chaperone by maintaining the newly synthesized protein in an open conformation. Functions as a peptidyl-prolyl cis-trans isomerase.</text>
</comment>
<comment type="catalytic activity">
    <reaction evidence="1">
        <text>[protein]-peptidylproline (omega=180) = [protein]-peptidylproline (omega=0)</text>
        <dbReference type="Rhea" id="RHEA:16237"/>
        <dbReference type="Rhea" id="RHEA-COMP:10747"/>
        <dbReference type="Rhea" id="RHEA-COMP:10748"/>
        <dbReference type="ChEBI" id="CHEBI:83833"/>
        <dbReference type="ChEBI" id="CHEBI:83834"/>
        <dbReference type="EC" id="5.2.1.8"/>
    </reaction>
</comment>
<comment type="subcellular location">
    <subcellularLocation>
        <location>Cytoplasm</location>
    </subcellularLocation>
    <text evidence="1">About half TF is bound to the ribosome near the polypeptide exit tunnel while the other half is free in the cytoplasm.</text>
</comment>
<comment type="domain">
    <text evidence="1">Consists of 3 domains; the N-terminus binds the ribosome, the middle domain has PPIase activity, while the C-terminus has intrinsic chaperone activity on its own.</text>
</comment>
<comment type="similarity">
    <text evidence="1">Belongs to the FKBP-type PPIase family. Tig subfamily.</text>
</comment>
<accession>Q1B5Z8</accession>
<sequence>MKSTVEKLSPTRVRINVEVPFTELEPDFDRAFKELAKQVRLPGFRPGKAPRKLLEARVGREAMLDQVVGEAVPGRYTEAVTSSDVQPLGQPEIEITKKEYGEDLVFTAEVDVRPEITLPDLSALEITVDPIEITDEEVDTELQSLRARFGTLTGVDRPAKDGDFVSIDLSATVDGKDVPEATTEGLSHEVGSGQLIEGLDDAIVGLSEGESKEFTTTLAAGEHAGKEAIVTVTVKSIKERELPEPDDEFAQLASEFDTIDELKESLTEQVRRVKRVQQAEQIRDKALELLLEQTEVPLPEKIVQAQIDDTVHNAIHGLDHDEDRFAEQLAEQGSSREEFDANTRTEAEKAVKTQLLMDALADQLEVQVGQGDLTERLVLMSRQYGLEPQQLLQILQQNNQLPAMFADVRRGLTIAAVVHGATVKDTDGNDIDTTEFFGPSGGAQAEAEGADEADADSDADSDTEADSDTEADEADEAK</sequence>
<dbReference type="EC" id="5.2.1.8" evidence="1"/>
<dbReference type="EMBL" id="CP000384">
    <property type="protein sequence ID" value="ABG09686.1"/>
    <property type="molecule type" value="Genomic_DNA"/>
</dbReference>
<dbReference type="SMR" id="Q1B5Z8"/>
<dbReference type="KEGG" id="mmc:Mmcs_3579"/>
<dbReference type="HOGENOM" id="CLU_033058_3_0_11"/>
<dbReference type="BioCyc" id="MSP164756:G1G6O-3650-MONOMER"/>
<dbReference type="GO" id="GO:0005737">
    <property type="term" value="C:cytoplasm"/>
    <property type="evidence" value="ECO:0007669"/>
    <property type="project" value="UniProtKB-SubCell"/>
</dbReference>
<dbReference type="GO" id="GO:0003755">
    <property type="term" value="F:peptidyl-prolyl cis-trans isomerase activity"/>
    <property type="evidence" value="ECO:0007669"/>
    <property type="project" value="UniProtKB-UniRule"/>
</dbReference>
<dbReference type="GO" id="GO:0044183">
    <property type="term" value="F:protein folding chaperone"/>
    <property type="evidence" value="ECO:0007669"/>
    <property type="project" value="TreeGrafter"/>
</dbReference>
<dbReference type="GO" id="GO:0043022">
    <property type="term" value="F:ribosome binding"/>
    <property type="evidence" value="ECO:0007669"/>
    <property type="project" value="TreeGrafter"/>
</dbReference>
<dbReference type="GO" id="GO:0051083">
    <property type="term" value="P:'de novo' cotranslational protein folding"/>
    <property type="evidence" value="ECO:0007669"/>
    <property type="project" value="TreeGrafter"/>
</dbReference>
<dbReference type="GO" id="GO:0051301">
    <property type="term" value="P:cell division"/>
    <property type="evidence" value="ECO:0007669"/>
    <property type="project" value="UniProtKB-KW"/>
</dbReference>
<dbReference type="GO" id="GO:0061077">
    <property type="term" value="P:chaperone-mediated protein folding"/>
    <property type="evidence" value="ECO:0007669"/>
    <property type="project" value="TreeGrafter"/>
</dbReference>
<dbReference type="GO" id="GO:0015031">
    <property type="term" value="P:protein transport"/>
    <property type="evidence" value="ECO:0007669"/>
    <property type="project" value="UniProtKB-UniRule"/>
</dbReference>
<dbReference type="GO" id="GO:0043335">
    <property type="term" value="P:protein unfolding"/>
    <property type="evidence" value="ECO:0007669"/>
    <property type="project" value="TreeGrafter"/>
</dbReference>
<dbReference type="FunFam" id="3.10.50.40:FF:000019">
    <property type="entry name" value="Trigger factor"/>
    <property type="match status" value="1"/>
</dbReference>
<dbReference type="Gene3D" id="3.10.50.40">
    <property type="match status" value="1"/>
</dbReference>
<dbReference type="Gene3D" id="3.30.70.1050">
    <property type="entry name" value="Trigger factor ribosome-binding domain"/>
    <property type="match status" value="1"/>
</dbReference>
<dbReference type="Gene3D" id="1.10.3120.10">
    <property type="entry name" value="Trigger factor, C-terminal domain"/>
    <property type="match status" value="1"/>
</dbReference>
<dbReference type="HAMAP" id="MF_00303">
    <property type="entry name" value="Trigger_factor_Tig"/>
    <property type="match status" value="1"/>
</dbReference>
<dbReference type="InterPro" id="IPR046357">
    <property type="entry name" value="PPIase_dom_sf"/>
</dbReference>
<dbReference type="InterPro" id="IPR001179">
    <property type="entry name" value="PPIase_FKBP_dom"/>
</dbReference>
<dbReference type="InterPro" id="IPR005215">
    <property type="entry name" value="Trig_fac"/>
</dbReference>
<dbReference type="InterPro" id="IPR008880">
    <property type="entry name" value="Trigger_fac_C"/>
</dbReference>
<dbReference type="InterPro" id="IPR037041">
    <property type="entry name" value="Trigger_fac_C_sf"/>
</dbReference>
<dbReference type="InterPro" id="IPR008881">
    <property type="entry name" value="Trigger_fac_ribosome-bd_bac"/>
</dbReference>
<dbReference type="InterPro" id="IPR036611">
    <property type="entry name" value="Trigger_fac_ribosome-bd_sf"/>
</dbReference>
<dbReference type="InterPro" id="IPR027304">
    <property type="entry name" value="Trigger_fact/SurA_dom_sf"/>
</dbReference>
<dbReference type="NCBIfam" id="TIGR00115">
    <property type="entry name" value="tig"/>
    <property type="match status" value="1"/>
</dbReference>
<dbReference type="PANTHER" id="PTHR30560">
    <property type="entry name" value="TRIGGER FACTOR CHAPERONE AND PEPTIDYL-PROLYL CIS/TRANS ISOMERASE"/>
    <property type="match status" value="1"/>
</dbReference>
<dbReference type="PANTHER" id="PTHR30560:SF3">
    <property type="entry name" value="TRIGGER FACTOR-LIKE PROTEIN TIG, CHLOROPLASTIC"/>
    <property type="match status" value="1"/>
</dbReference>
<dbReference type="Pfam" id="PF00254">
    <property type="entry name" value="FKBP_C"/>
    <property type="match status" value="1"/>
</dbReference>
<dbReference type="Pfam" id="PF05698">
    <property type="entry name" value="Trigger_C"/>
    <property type="match status" value="1"/>
</dbReference>
<dbReference type="Pfam" id="PF05697">
    <property type="entry name" value="Trigger_N"/>
    <property type="match status" value="1"/>
</dbReference>
<dbReference type="PIRSF" id="PIRSF003095">
    <property type="entry name" value="Trigger_factor"/>
    <property type="match status" value="1"/>
</dbReference>
<dbReference type="SUPFAM" id="SSF54534">
    <property type="entry name" value="FKBP-like"/>
    <property type="match status" value="1"/>
</dbReference>
<dbReference type="SUPFAM" id="SSF109998">
    <property type="entry name" value="Triger factor/SurA peptide-binding domain-like"/>
    <property type="match status" value="1"/>
</dbReference>
<dbReference type="SUPFAM" id="SSF102735">
    <property type="entry name" value="Trigger factor ribosome-binding domain"/>
    <property type="match status" value="1"/>
</dbReference>
<dbReference type="PROSITE" id="PS50059">
    <property type="entry name" value="FKBP_PPIASE"/>
    <property type="match status" value="1"/>
</dbReference>
<keyword id="KW-0131">Cell cycle</keyword>
<keyword id="KW-0132">Cell division</keyword>
<keyword id="KW-0143">Chaperone</keyword>
<keyword id="KW-0963">Cytoplasm</keyword>
<keyword id="KW-0413">Isomerase</keyword>
<keyword id="KW-0697">Rotamase</keyword>
<organism>
    <name type="scientific">Mycobacterium sp. (strain MCS)</name>
    <dbReference type="NCBI Taxonomy" id="164756"/>
    <lineage>
        <taxon>Bacteria</taxon>
        <taxon>Bacillati</taxon>
        <taxon>Actinomycetota</taxon>
        <taxon>Actinomycetes</taxon>
        <taxon>Mycobacteriales</taxon>
        <taxon>Mycobacteriaceae</taxon>
        <taxon>Mycobacterium</taxon>
    </lineage>
</organism>
<feature type="chain" id="PRO_1000022714" description="Trigger factor">
    <location>
        <begin position="1"/>
        <end position="478"/>
    </location>
</feature>
<feature type="domain" description="PPIase FKBP-type" evidence="1">
    <location>
        <begin position="162"/>
        <end position="243"/>
    </location>
</feature>
<feature type="region of interest" description="Disordered" evidence="2">
    <location>
        <begin position="424"/>
        <end position="478"/>
    </location>
</feature>
<feature type="compositionally biased region" description="Acidic residues" evidence="2">
    <location>
        <begin position="448"/>
        <end position="478"/>
    </location>
</feature>
<proteinExistence type="inferred from homology"/>
<reference key="1">
    <citation type="submission" date="2006-06" db="EMBL/GenBank/DDBJ databases">
        <title>Complete sequence of chromosome of Mycobacterium sp. MCS.</title>
        <authorList>
            <consortium name="US DOE Joint Genome Institute"/>
            <person name="Copeland A."/>
            <person name="Lucas S."/>
            <person name="Lapidus A."/>
            <person name="Barry K."/>
            <person name="Detter J.C."/>
            <person name="Glavina del Rio T."/>
            <person name="Hammon N."/>
            <person name="Israni S."/>
            <person name="Dalin E."/>
            <person name="Tice H."/>
            <person name="Pitluck S."/>
            <person name="Martinez M."/>
            <person name="Schmutz J."/>
            <person name="Larimer F."/>
            <person name="Land M."/>
            <person name="Hauser L."/>
            <person name="Kyrpides N."/>
            <person name="Kim E."/>
            <person name="Miller C.D."/>
            <person name="Hughes J.E."/>
            <person name="Anderson A.J."/>
            <person name="Sims R.C."/>
            <person name="Richardson P."/>
        </authorList>
    </citation>
    <scope>NUCLEOTIDE SEQUENCE [LARGE SCALE GENOMIC DNA]</scope>
    <source>
        <strain>MCS</strain>
    </source>
</reference>
<evidence type="ECO:0000255" key="1">
    <source>
        <dbReference type="HAMAP-Rule" id="MF_00303"/>
    </source>
</evidence>
<evidence type="ECO:0000256" key="2">
    <source>
        <dbReference type="SAM" id="MobiDB-lite"/>
    </source>
</evidence>
<protein>
    <recommendedName>
        <fullName evidence="1">Trigger factor</fullName>
        <shortName evidence="1">TF</shortName>
        <ecNumber evidence="1">5.2.1.8</ecNumber>
    </recommendedName>
    <alternativeName>
        <fullName evidence="1">PPIase</fullName>
    </alternativeName>
</protein>
<gene>
    <name evidence="1" type="primary">tig</name>
    <name type="ordered locus">Mmcs_3579</name>
</gene>
<name>TIG_MYCSS</name>